<name>HIUH_MOUSE</name>
<organism>
    <name type="scientific">Mus musculus</name>
    <name type="common">Mouse</name>
    <dbReference type="NCBI Taxonomy" id="10090"/>
    <lineage>
        <taxon>Eukaryota</taxon>
        <taxon>Metazoa</taxon>
        <taxon>Chordata</taxon>
        <taxon>Craniata</taxon>
        <taxon>Vertebrata</taxon>
        <taxon>Euteleostomi</taxon>
        <taxon>Mammalia</taxon>
        <taxon>Eutheria</taxon>
        <taxon>Euarchontoglires</taxon>
        <taxon>Glires</taxon>
        <taxon>Rodentia</taxon>
        <taxon>Myomorpha</taxon>
        <taxon>Muroidea</taxon>
        <taxon>Muridae</taxon>
        <taxon>Murinae</taxon>
        <taxon>Mus</taxon>
        <taxon>Mus</taxon>
    </lineage>
</organism>
<sequence length="118" mass="13559">MATESSPLTTHVLDTASGLPAQGLCLRLSRLEAPCQQWMELRTSYTNLDGRCPGLLTPSQIKPGTYKLFFDTERYWKERGQESFYPYVEVVFTITKETQKFHVPLLLSPWSYTTYRGS</sequence>
<evidence type="ECO:0000250" key="1"/>
<evidence type="ECO:0000269" key="2">
    <source>
    </source>
</evidence>
<evidence type="ECO:0000269" key="3">
    <source>
    </source>
</evidence>
<evidence type="ECO:0000305" key="4"/>
<feature type="chain" id="PRO_0000315282" description="5-hydroxyisourate hydrolase">
    <location>
        <begin position="1"/>
        <end position="118"/>
    </location>
</feature>
<feature type="binding site" evidence="1">
    <location>
        <position position="11"/>
    </location>
    <ligand>
        <name>substrate</name>
    </ligand>
</feature>
<feature type="binding site" evidence="1">
    <location>
        <position position="51"/>
    </location>
    <ligand>
        <name>substrate</name>
    </ligand>
</feature>
<feature type="binding site" evidence="1">
    <location>
        <position position="115"/>
    </location>
    <ligand>
        <name>substrate</name>
    </ligand>
</feature>
<feature type="mutagenesis site" description="Strongly reduced enzyme activity." evidence="3">
    <original>H</original>
    <variation>N</variation>
    <location>
        <position position="11"/>
    </location>
</feature>
<feature type="mutagenesis site" description="Strongly reduced enzyme activity." evidence="3">
    <original>R</original>
    <variation>E</variation>
    <location>
        <position position="51"/>
    </location>
</feature>
<feature type="mutagenesis site" description="No effect." evidence="3">
    <original>R</original>
    <variation>K</variation>
    <location>
        <position position="51"/>
    </location>
</feature>
<feature type="mutagenesis site" description="Reduced enzyme activity." evidence="3">
    <original>H</original>
    <variation>N</variation>
    <location>
        <position position="102"/>
    </location>
</feature>
<feature type="mutagenesis site" description="Reduced enzyme activity." evidence="3">
    <location>
        <begin position="115"/>
        <end position="118"/>
    </location>
</feature>
<feature type="mutagenesis site" description="No effect." evidence="3">
    <original>S</original>
    <variation>A</variation>
    <location>
        <position position="118"/>
    </location>
</feature>
<proteinExistence type="evidence at protein level"/>
<accession>Q9CRB3</accession>
<keyword id="KW-0378">Hydrolase</keyword>
<keyword id="KW-0576">Peroxisome</keyword>
<keyword id="KW-0659">Purine metabolism</keyword>
<keyword id="KW-1185">Reference proteome</keyword>
<dbReference type="EC" id="3.5.2.17"/>
<dbReference type="EMBL" id="DQ225768">
    <property type="protein sequence ID" value="ABB46375.1"/>
    <property type="molecule type" value="mRNA"/>
</dbReference>
<dbReference type="EMBL" id="AK004470">
    <property type="protein sequence ID" value="BAB23318.1"/>
    <property type="molecule type" value="mRNA"/>
</dbReference>
<dbReference type="EMBL" id="AK013117">
    <property type="protein sequence ID" value="BAB28659.1"/>
    <property type="molecule type" value="mRNA"/>
</dbReference>
<dbReference type="EMBL" id="BC051545">
    <property type="protein sequence ID" value="AAH51545.1"/>
    <property type="molecule type" value="mRNA"/>
</dbReference>
<dbReference type="CCDS" id="CCDS21986.1"/>
<dbReference type="RefSeq" id="NP_001346734.1">
    <property type="nucleotide sequence ID" value="NM_001359805.1"/>
</dbReference>
<dbReference type="RefSeq" id="NP_084097.1">
    <property type="nucleotide sequence ID" value="NM_029821.3"/>
</dbReference>
<dbReference type="RefSeq" id="XP_006536336.1">
    <property type="nucleotide sequence ID" value="XM_006536273.1"/>
</dbReference>
<dbReference type="RefSeq" id="XP_030098953.1">
    <property type="nucleotide sequence ID" value="XM_030243093.1"/>
</dbReference>
<dbReference type="SMR" id="Q9CRB3"/>
<dbReference type="FunCoup" id="Q9CRB3">
    <property type="interactions" value="615"/>
</dbReference>
<dbReference type="STRING" id="10090.ENSMUSP00000101665"/>
<dbReference type="iPTMnet" id="Q9CRB3"/>
<dbReference type="PhosphoSitePlus" id="Q9CRB3"/>
<dbReference type="SwissPalm" id="Q9CRB3"/>
<dbReference type="jPOST" id="Q9CRB3"/>
<dbReference type="PaxDb" id="10090-ENSMUSP00000026554"/>
<dbReference type="PeptideAtlas" id="Q9CRB3"/>
<dbReference type="ProteomicsDB" id="273362"/>
<dbReference type="Ensembl" id="ENSMUST00000026554.11">
    <property type="protein sequence ID" value="ENSMUSP00000026554.5"/>
    <property type="gene ID" value="ENSMUSG00000025481.13"/>
</dbReference>
<dbReference type="Ensembl" id="ENSMUST00000185612.3">
    <property type="protein sequence ID" value="ENSMUSP00000140559.2"/>
    <property type="gene ID" value="ENSMUSG00000025481.13"/>
</dbReference>
<dbReference type="Ensembl" id="ENSMUST00000211372.2">
    <property type="protein sequence ID" value="ENSMUSP00000147522.2"/>
    <property type="gene ID" value="ENSMUSG00000025481.13"/>
</dbReference>
<dbReference type="GeneID" id="76974"/>
<dbReference type="KEGG" id="mmu:76974"/>
<dbReference type="UCSC" id="uc009kif.1">
    <property type="organism name" value="mouse"/>
</dbReference>
<dbReference type="AGR" id="MGI:1916142"/>
<dbReference type="CTD" id="76974"/>
<dbReference type="MGI" id="MGI:1916142">
    <property type="gene designation" value="Urah"/>
</dbReference>
<dbReference type="VEuPathDB" id="HostDB:ENSMUSG00000025481"/>
<dbReference type="eggNOG" id="KOG3006">
    <property type="taxonomic scope" value="Eukaryota"/>
</dbReference>
<dbReference type="GeneTree" id="ENSGT00940000153229"/>
<dbReference type="HOGENOM" id="CLU_115536_1_0_1"/>
<dbReference type="InParanoid" id="Q9CRB3"/>
<dbReference type="OMA" id="CSENQNY"/>
<dbReference type="OrthoDB" id="10265230at2759"/>
<dbReference type="PhylomeDB" id="Q9CRB3"/>
<dbReference type="TreeFam" id="TF300210"/>
<dbReference type="BRENDA" id="3.5.2.17">
    <property type="organism ID" value="3474"/>
</dbReference>
<dbReference type="UniPathway" id="UPA00394">
    <property type="reaction ID" value="UER00651"/>
</dbReference>
<dbReference type="BioGRID-ORCS" id="76974">
    <property type="hits" value="1 hit in 77 CRISPR screens"/>
</dbReference>
<dbReference type="ChiTaRS" id="Urah">
    <property type="organism name" value="mouse"/>
</dbReference>
<dbReference type="PRO" id="PR:Q9CRB3"/>
<dbReference type="Proteomes" id="UP000000589">
    <property type="component" value="Chromosome 7"/>
</dbReference>
<dbReference type="RNAct" id="Q9CRB3">
    <property type="molecule type" value="protein"/>
</dbReference>
<dbReference type="Bgee" id="ENSMUSG00000025481">
    <property type="expression patterns" value="Expressed in left lobe of liver and 186 other cell types or tissues"/>
</dbReference>
<dbReference type="ExpressionAtlas" id="Q9CRB3">
    <property type="expression patterns" value="baseline and differential"/>
</dbReference>
<dbReference type="GO" id="GO:0005739">
    <property type="term" value="C:mitochondrion"/>
    <property type="evidence" value="ECO:0007005"/>
    <property type="project" value="MGI"/>
</dbReference>
<dbReference type="GO" id="GO:0005777">
    <property type="term" value="C:peroxisome"/>
    <property type="evidence" value="ECO:0000314"/>
    <property type="project" value="MGI"/>
</dbReference>
<dbReference type="GO" id="GO:0016787">
    <property type="term" value="F:hydrolase activity"/>
    <property type="evidence" value="ECO:0000314"/>
    <property type="project" value="MGI"/>
</dbReference>
<dbReference type="GO" id="GO:0033971">
    <property type="term" value="F:hydroxyisourate hydrolase activity"/>
    <property type="evidence" value="ECO:0000314"/>
    <property type="project" value="MGI"/>
</dbReference>
<dbReference type="GO" id="GO:0006154">
    <property type="term" value="P:adenosine catabolic process"/>
    <property type="evidence" value="ECO:0000314"/>
    <property type="project" value="MGI"/>
</dbReference>
<dbReference type="GO" id="GO:0000255">
    <property type="term" value="P:allantoin metabolic process"/>
    <property type="evidence" value="ECO:0000314"/>
    <property type="project" value="MGI"/>
</dbReference>
<dbReference type="GO" id="GO:0043605">
    <property type="term" value="P:amide catabolic process"/>
    <property type="evidence" value="ECO:0000314"/>
    <property type="project" value="MGI"/>
</dbReference>
<dbReference type="GO" id="GO:0006196">
    <property type="term" value="P:AMP catabolic process"/>
    <property type="evidence" value="ECO:0000314"/>
    <property type="project" value="MGI"/>
</dbReference>
<dbReference type="GO" id="GO:0046059">
    <property type="term" value="P:dAMP catabolic process"/>
    <property type="evidence" value="ECO:0000314"/>
    <property type="project" value="MGI"/>
</dbReference>
<dbReference type="GO" id="GO:0006157">
    <property type="term" value="P:deoxyadenosine catabolic process"/>
    <property type="evidence" value="ECO:0000314"/>
    <property type="project" value="MGI"/>
</dbReference>
<dbReference type="GO" id="GO:0006161">
    <property type="term" value="P:deoxyguanosine catabolic process"/>
    <property type="evidence" value="ECO:0000314"/>
    <property type="project" value="MGI"/>
</dbReference>
<dbReference type="GO" id="GO:0006149">
    <property type="term" value="P:deoxyinosine catabolic process"/>
    <property type="evidence" value="ECO:0000314"/>
    <property type="project" value="MGI"/>
</dbReference>
<dbReference type="GO" id="GO:0046055">
    <property type="term" value="P:dGMP catabolic process"/>
    <property type="evidence" value="ECO:0000314"/>
    <property type="project" value="MGI"/>
</dbReference>
<dbReference type="GO" id="GO:0046038">
    <property type="term" value="P:GMP catabolic process"/>
    <property type="evidence" value="ECO:0000314"/>
    <property type="project" value="MGI"/>
</dbReference>
<dbReference type="GO" id="GO:0006147">
    <property type="term" value="P:guanine catabolic process"/>
    <property type="evidence" value="ECO:0000314"/>
    <property type="project" value="MGI"/>
</dbReference>
<dbReference type="GO" id="GO:0009114">
    <property type="term" value="P:hypoxanthine catabolic process"/>
    <property type="evidence" value="ECO:0000314"/>
    <property type="project" value="MGI"/>
</dbReference>
<dbReference type="GO" id="GO:0006204">
    <property type="term" value="P:IMP catabolic process"/>
    <property type="evidence" value="ECO:0000314"/>
    <property type="project" value="MGI"/>
</dbReference>
<dbReference type="GO" id="GO:0006148">
    <property type="term" value="P:inosine catabolic process"/>
    <property type="evidence" value="ECO:0000314"/>
    <property type="project" value="MGI"/>
</dbReference>
<dbReference type="GO" id="GO:0019628">
    <property type="term" value="P:urate catabolic process"/>
    <property type="evidence" value="ECO:0000314"/>
    <property type="project" value="MGI"/>
</dbReference>
<dbReference type="GO" id="GO:0009115">
    <property type="term" value="P:xanthine catabolic process"/>
    <property type="evidence" value="ECO:0000314"/>
    <property type="project" value="MGI"/>
</dbReference>
<dbReference type="CDD" id="cd05822">
    <property type="entry name" value="TLP_HIUase"/>
    <property type="match status" value="1"/>
</dbReference>
<dbReference type="FunFam" id="2.60.40.180:FF:000004">
    <property type="entry name" value="5-hydroxyisourate hydrolase"/>
    <property type="match status" value="1"/>
</dbReference>
<dbReference type="Gene3D" id="2.60.40.180">
    <property type="entry name" value="Transthyretin/hydroxyisourate hydrolase domain"/>
    <property type="match status" value="1"/>
</dbReference>
<dbReference type="InterPro" id="IPR014306">
    <property type="entry name" value="Hydroxyisourate_hydrolase"/>
</dbReference>
<dbReference type="InterPro" id="IPR000895">
    <property type="entry name" value="Transthyretin/HIU_hydrolase"/>
</dbReference>
<dbReference type="InterPro" id="IPR023416">
    <property type="entry name" value="Transthyretin/HIU_hydrolase_d"/>
</dbReference>
<dbReference type="InterPro" id="IPR036817">
    <property type="entry name" value="Transthyretin/HIU_hydrolase_sf"/>
</dbReference>
<dbReference type="InterPro" id="IPR023419">
    <property type="entry name" value="Transthyretin_CS"/>
</dbReference>
<dbReference type="NCBIfam" id="TIGR02962">
    <property type="entry name" value="hdxy_isourate"/>
    <property type="match status" value="1"/>
</dbReference>
<dbReference type="PANTHER" id="PTHR10395:SF11">
    <property type="entry name" value="5-HYDROXYISOURATE HYDROLASE"/>
    <property type="match status" value="1"/>
</dbReference>
<dbReference type="PANTHER" id="PTHR10395">
    <property type="entry name" value="URICASE AND TRANSTHYRETIN-RELATED"/>
    <property type="match status" value="1"/>
</dbReference>
<dbReference type="Pfam" id="PF00576">
    <property type="entry name" value="Transthyretin"/>
    <property type="match status" value="1"/>
</dbReference>
<dbReference type="PRINTS" id="PR00189">
    <property type="entry name" value="TRNSTHYRETIN"/>
</dbReference>
<dbReference type="SMART" id="SM00095">
    <property type="entry name" value="TR_THY"/>
    <property type="match status" value="1"/>
</dbReference>
<dbReference type="SUPFAM" id="SSF49472">
    <property type="entry name" value="Transthyretin (synonym: prealbumin)"/>
    <property type="match status" value="1"/>
</dbReference>
<dbReference type="PROSITE" id="PS00769">
    <property type="entry name" value="TRANSTHYRETIN_2"/>
    <property type="match status" value="1"/>
</dbReference>
<protein>
    <recommendedName>
        <fullName>5-hydroxyisourate hydrolase</fullName>
        <shortName>HIU hydrolase</shortName>
        <shortName>HIUHase</shortName>
        <ecNumber>3.5.2.17</ecNumber>
    </recommendedName>
    <alternativeName>
        <fullName>Transthyretin-related protein</fullName>
    </alternativeName>
</protein>
<reference key="1">
    <citation type="journal article" date="2006" name="Nat. Chem. Biol.">
        <title>Completing the uric acid degradation pathway through phylogenetic comparison of whole genomes.</title>
        <authorList>
            <person name="Ramazzina I."/>
            <person name="Folli C."/>
            <person name="Secchi A."/>
            <person name="Berni R."/>
            <person name="Percudani R."/>
        </authorList>
    </citation>
    <scope>NUCLEOTIDE SEQUENCE [MRNA]</scope>
    <scope>CATALYTIC ACTIVITY</scope>
</reference>
<reference key="2">
    <citation type="journal article" date="2005" name="Science">
        <title>The transcriptional landscape of the mammalian genome.</title>
        <authorList>
            <person name="Carninci P."/>
            <person name="Kasukawa T."/>
            <person name="Katayama S."/>
            <person name="Gough J."/>
            <person name="Frith M.C."/>
            <person name="Maeda N."/>
            <person name="Oyama R."/>
            <person name="Ravasi T."/>
            <person name="Lenhard B."/>
            <person name="Wells C."/>
            <person name="Kodzius R."/>
            <person name="Shimokawa K."/>
            <person name="Bajic V.B."/>
            <person name="Brenner S.E."/>
            <person name="Batalov S."/>
            <person name="Forrest A.R."/>
            <person name="Zavolan M."/>
            <person name="Davis M.J."/>
            <person name="Wilming L.G."/>
            <person name="Aidinis V."/>
            <person name="Allen J.E."/>
            <person name="Ambesi-Impiombato A."/>
            <person name="Apweiler R."/>
            <person name="Aturaliya R.N."/>
            <person name="Bailey T.L."/>
            <person name="Bansal M."/>
            <person name="Baxter L."/>
            <person name="Beisel K.W."/>
            <person name="Bersano T."/>
            <person name="Bono H."/>
            <person name="Chalk A.M."/>
            <person name="Chiu K.P."/>
            <person name="Choudhary V."/>
            <person name="Christoffels A."/>
            <person name="Clutterbuck D.R."/>
            <person name="Crowe M.L."/>
            <person name="Dalla E."/>
            <person name="Dalrymple B.P."/>
            <person name="de Bono B."/>
            <person name="Della Gatta G."/>
            <person name="di Bernardo D."/>
            <person name="Down T."/>
            <person name="Engstrom P."/>
            <person name="Fagiolini M."/>
            <person name="Faulkner G."/>
            <person name="Fletcher C.F."/>
            <person name="Fukushima T."/>
            <person name="Furuno M."/>
            <person name="Futaki S."/>
            <person name="Gariboldi M."/>
            <person name="Georgii-Hemming P."/>
            <person name="Gingeras T.R."/>
            <person name="Gojobori T."/>
            <person name="Green R.E."/>
            <person name="Gustincich S."/>
            <person name="Harbers M."/>
            <person name="Hayashi Y."/>
            <person name="Hensch T.K."/>
            <person name="Hirokawa N."/>
            <person name="Hill D."/>
            <person name="Huminiecki L."/>
            <person name="Iacono M."/>
            <person name="Ikeo K."/>
            <person name="Iwama A."/>
            <person name="Ishikawa T."/>
            <person name="Jakt M."/>
            <person name="Kanapin A."/>
            <person name="Katoh M."/>
            <person name="Kawasawa Y."/>
            <person name="Kelso J."/>
            <person name="Kitamura H."/>
            <person name="Kitano H."/>
            <person name="Kollias G."/>
            <person name="Krishnan S.P."/>
            <person name="Kruger A."/>
            <person name="Kummerfeld S.K."/>
            <person name="Kurochkin I.V."/>
            <person name="Lareau L.F."/>
            <person name="Lazarevic D."/>
            <person name="Lipovich L."/>
            <person name="Liu J."/>
            <person name="Liuni S."/>
            <person name="McWilliam S."/>
            <person name="Madan Babu M."/>
            <person name="Madera M."/>
            <person name="Marchionni L."/>
            <person name="Matsuda H."/>
            <person name="Matsuzawa S."/>
            <person name="Miki H."/>
            <person name="Mignone F."/>
            <person name="Miyake S."/>
            <person name="Morris K."/>
            <person name="Mottagui-Tabar S."/>
            <person name="Mulder N."/>
            <person name="Nakano N."/>
            <person name="Nakauchi H."/>
            <person name="Ng P."/>
            <person name="Nilsson R."/>
            <person name="Nishiguchi S."/>
            <person name="Nishikawa S."/>
            <person name="Nori F."/>
            <person name="Ohara O."/>
            <person name="Okazaki Y."/>
            <person name="Orlando V."/>
            <person name="Pang K.C."/>
            <person name="Pavan W.J."/>
            <person name="Pavesi G."/>
            <person name="Pesole G."/>
            <person name="Petrovsky N."/>
            <person name="Piazza S."/>
            <person name="Reed J."/>
            <person name="Reid J.F."/>
            <person name="Ring B.Z."/>
            <person name="Ringwald M."/>
            <person name="Rost B."/>
            <person name="Ruan Y."/>
            <person name="Salzberg S.L."/>
            <person name="Sandelin A."/>
            <person name="Schneider C."/>
            <person name="Schoenbach C."/>
            <person name="Sekiguchi K."/>
            <person name="Semple C.A."/>
            <person name="Seno S."/>
            <person name="Sessa L."/>
            <person name="Sheng Y."/>
            <person name="Shibata Y."/>
            <person name="Shimada H."/>
            <person name="Shimada K."/>
            <person name="Silva D."/>
            <person name="Sinclair B."/>
            <person name="Sperling S."/>
            <person name="Stupka E."/>
            <person name="Sugiura K."/>
            <person name="Sultana R."/>
            <person name="Takenaka Y."/>
            <person name="Taki K."/>
            <person name="Tammoja K."/>
            <person name="Tan S.L."/>
            <person name="Tang S."/>
            <person name="Taylor M.S."/>
            <person name="Tegner J."/>
            <person name="Teichmann S.A."/>
            <person name="Ueda H.R."/>
            <person name="van Nimwegen E."/>
            <person name="Verardo R."/>
            <person name="Wei C.L."/>
            <person name="Yagi K."/>
            <person name="Yamanishi H."/>
            <person name="Zabarovsky E."/>
            <person name="Zhu S."/>
            <person name="Zimmer A."/>
            <person name="Hide W."/>
            <person name="Bult C."/>
            <person name="Grimmond S.M."/>
            <person name="Teasdale R.D."/>
            <person name="Liu E.T."/>
            <person name="Brusic V."/>
            <person name="Quackenbush J."/>
            <person name="Wahlestedt C."/>
            <person name="Mattick J.S."/>
            <person name="Hume D.A."/>
            <person name="Kai C."/>
            <person name="Sasaki D."/>
            <person name="Tomaru Y."/>
            <person name="Fukuda S."/>
            <person name="Kanamori-Katayama M."/>
            <person name="Suzuki M."/>
            <person name="Aoki J."/>
            <person name="Arakawa T."/>
            <person name="Iida J."/>
            <person name="Imamura K."/>
            <person name="Itoh M."/>
            <person name="Kato T."/>
            <person name="Kawaji H."/>
            <person name="Kawagashira N."/>
            <person name="Kawashima T."/>
            <person name="Kojima M."/>
            <person name="Kondo S."/>
            <person name="Konno H."/>
            <person name="Nakano K."/>
            <person name="Ninomiya N."/>
            <person name="Nishio T."/>
            <person name="Okada M."/>
            <person name="Plessy C."/>
            <person name="Shibata K."/>
            <person name="Shiraki T."/>
            <person name="Suzuki S."/>
            <person name="Tagami M."/>
            <person name="Waki K."/>
            <person name="Watahiki A."/>
            <person name="Okamura-Oho Y."/>
            <person name="Suzuki H."/>
            <person name="Kawai J."/>
            <person name="Hayashizaki Y."/>
        </authorList>
    </citation>
    <scope>NUCLEOTIDE SEQUENCE [LARGE SCALE MRNA]</scope>
    <source>
        <strain>C57BL/6J</strain>
        <tissue>Embryo</tissue>
    </source>
</reference>
<reference key="3">
    <citation type="journal article" date="2004" name="Genome Res.">
        <title>The status, quality, and expansion of the NIH full-length cDNA project: the Mammalian Gene Collection (MGC).</title>
        <authorList>
            <consortium name="The MGC Project Team"/>
        </authorList>
    </citation>
    <scope>NUCLEOTIDE SEQUENCE [LARGE SCALE MRNA]</scope>
    <source>
        <strain>Czech II</strain>
        <tissue>Lung</tissue>
    </source>
</reference>
<reference key="4">
    <citation type="journal article" date="2006" name="Mol. Cells">
        <title>Mouse transthyretin-related protein is a hydrolase which degrades 5-hydroxyisourate, the end product of the uricase reaction.</title>
        <authorList>
            <person name="Lee Y."/>
            <person name="Park B.C."/>
            <person name="Lee do H."/>
            <person name="Bae K.-H."/>
            <person name="Cho S."/>
            <person name="Lee C.H."/>
            <person name="Lee J.S."/>
            <person name="Myung P.K."/>
            <person name="Park S.G."/>
        </authorList>
    </citation>
    <scope>CATALYTIC ACTIVITY</scope>
    <scope>MUTAGENESIS OF HIS-11; ARG-51; HIS-102; 115-TYR--SER-118 AND SER-118</scope>
</reference>
<reference key="5">
    <citation type="journal article" date="2010" name="Cell">
        <title>A tissue-specific atlas of mouse protein phosphorylation and expression.</title>
        <authorList>
            <person name="Huttlin E.L."/>
            <person name="Jedrychowski M.P."/>
            <person name="Elias J.E."/>
            <person name="Goswami T."/>
            <person name="Rad R."/>
            <person name="Beausoleil S.A."/>
            <person name="Villen J."/>
            <person name="Haas W."/>
            <person name="Sowa M.E."/>
            <person name="Gygi S.P."/>
        </authorList>
    </citation>
    <scope>IDENTIFICATION BY MASS SPECTROMETRY [LARGE SCALE ANALYSIS]</scope>
    <source>
        <tissue>Liver</tissue>
    </source>
</reference>
<comment type="function">
    <text>Catalyzes the hydrolysis of 5-hydroxyisourate (HIU) to 2-oxo-4-hydroxy-4-carboxy-5-ureidoimidazoline (OHCU).</text>
</comment>
<comment type="catalytic activity">
    <reaction evidence="2 3">
        <text>5-hydroxyisourate + H2O = 5-hydroxy-2-oxo-4-ureido-2,5-dihydro-1H-imidazole-5-carboxylate + H(+)</text>
        <dbReference type="Rhea" id="RHEA:23736"/>
        <dbReference type="ChEBI" id="CHEBI:15377"/>
        <dbReference type="ChEBI" id="CHEBI:15378"/>
        <dbReference type="ChEBI" id="CHEBI:18072"/>
        <dbReference type="ChEBI" id="CHEBI:58639"/>
        <dbReference type="EC" id="3.5.2.17"/>
    </reaction>
</comment>
<comment type="pathway">
    <text>Purine metabolism; urate degradation; (S)-allantoin from urate: step 2/3.</text>
</comment>
<comment type="subunit">
    <text evidence="1">Homotetramer.</text>
</comment>
<comment type="subcellular location">
    <subcellularLocation>
        <location evidence="4">Peroxisome</location>
    </subcellularLocation>
</comment>
<comment type="miscellaneous">
    <text>HIU hydrolysis also occurs spontaneously, but more slowly.</text>
</comment>
<comment type="similarity">
    <text evidence="4">Belongs to the transthyretin family. 5-hydroxyisourate hydrolase subfamily.</text>
</comment>
<gene>
    <name type="primary">Urah</name>
</gene>